<organism>
    <name type="scientific">Homo sapiens</name>
    <name type="common">Human</name>
    <dbReference type="NCBI Taxonomy" id="9606"/>
    <lineage>
        <taxon>Eukaryota</taxon>
        <taxon>Metazoa</taxon>
        <taxon>Chordata</taxon>
        <taxon>Craniata</taxon>
        <taxon>Vertebrata</taxon>
        <taxon>Euteleostomi</taxon>
        <taxon>Mammalia</taxon>
        <taxon>Eutheria</taxon>
        <taxon>Euarchontoglires</taxon>
        <taxon>Primates</taxon>
        <taxon>Haplorrhini</taxon>
        <taxon>Catarrhini</taxon>
        <taxon>Hominidae</taxon>
        <taxon>Homo</taxon>
    </lineage>
</organism>
<reference key="1">
    <citation type="journal article" date="2005" name="Nature">
        <title>The DNA sequence of the human X chromosome.</title>
        <authorList>
            <person name="Ross M.T."/>
            <person name="Grafham D.V."/>
            <person name="Coffey A.J."/>
            <person name="Scherer S."/>
            <person name="McLay K."/>
            <person name="Muzny D."/>
            <person name="Platzer M."/>
            <person name="Howell G.R."/>
            <person name="Burrows C."/>
            <person name="Bird C.P."/>
            <person name="Frankish A."/>
            <person name="Lovell F.L."/>
            <person name="Howe K.L."/>
            <person name="Ashurst J.L."/>
            <person name="Fulton R.S."/>
            <person name="Sudbrak R."/>
            <person name="Wen G."/>
            <person name="Jones M.C."/>
            <person name="Hurles M.E."/>
            <person name="Andrews T.D."/>
            <person name="Scott C.E."/>
            <person name="Searle S."/>
            <person name="Ramser J."/>
            <person name="Whittaker A."/>
            <person name="Deadman R."/>
            <person name="Carter N.P."/>
            <person name="Hunt S.E."/>
            <person name="Chen R."/>
            <person name="Cree A."/>
            <person name="Gunaratne P."/>
            <person name="Havlak P."/>
            <person name="Hodgson A."/>
            <person name="Metzker M.L."/>
            <person name="Richards S."/>
            <person name="Scott G."/>
            <person name="Steffen D."/>
            <person name="Sodergren E."/>
            <person name="Wheeler D.A."/>
            <person name="Worley K.C."/>
            <person name="Ainscough R."/>
            <person name="Ambrose K.D."/>
            <person name="Ansari-Lari M.A."/>
            <person name="Aradhya S."/>
            <person name="Ashwell R.I."/>
            <person name="Babbage A.K."/>
            <person name="Bagguley C.L."/>
            <person name="Ballabio A."/>
            <person name="Banerjee R."/>
            <person name="Barker G.E."/>
            <person name="Barlow K.F."/>
            <person name="Barrett I.P."/>
            <person name="Bates K.N."/>
            <person name="Beare D.M."/>
            <person name="Beasley H."/>
            <person name="Beasley O."/>
            <person name="Beck A."/>
            <person name="Bethel G."/>
            <person name="Blechschmidt K."/>
            <person name="Brady N."/>
            <person name="Bray-Allen S."/>
            <person name="Bridgeman A.M."/>
            <person name="Brown A.J."/>
            <person name="Brown M.J."/>
            <person name="Bonnin D."/>
            <person name="Bruford E.A."/>
            <person name="Buhay C."/>
            <person name="Burch P."/>
            <person name="Burford D."/>
            <person name="Burgess J."/>
            <person name="Burrill W."/>
            <person name="Burton J."/>
            <person name="Bye J.M."/>
            <person name="Carder C."/>
            <person name="Carrel L."/>
            <person name="Chako J."/>
            <person name="Chapman J.C."/>
            <person name="Chavez D."/>
            <person name="Chen E."/>
            <person name="Chen G."/>
            <person name="Chen Y."/>
            <person name="Chen Z."/>
            <person name="Chinault C."/>
            <person name="Ciccodicola A."/>
            <person name="Clark S.Y."/>
            <person name="Clarke G."/>
            <person name="Clee C.M."/>
            <person name="Clegg S."/>
            <person name="Clerc-Blankenburg K."/>
            <person name="Clifford K."/>
            <person name="Cobley V."/>
            <person name="Cole C.G."/>
            <person name="Conquer J.S."/>
            <person name="Corby N."/>
            <person name="Connor R.E."/>
            <person name="David R."/>
            <person name="Davies J."/>
            <person name="Davis C."/>
            <person name="Davis J."/>
            <person name="Delgado O."/>
            <person name="Deshazo D."/>
            <person name="Dhami P."/>
            <person name="Ding Y."/>
            <person name="Dinh H."/>
            <person name="Dodsworth S."/>
            <person name="Draper H."/>
            <person name="Dugan-Rocha S."/>
            <person name="Dunham A."/>
            <person name="Dunn M."/>
            <person name="Durbin K.J."/>
            <person name="Dutta I."/>
            <person name="Eades T."/>
            <person name="Ellwood M."/>
            <person name="Emery-Cohen A."/>
            <person name="Errington H."/>
            <person name="Evans K.L."/>
            <person name="Faulkner L."/>
            <person name="Francis F."/>
            <person name="Frankland J."/>
            <person name="Fraser A.E."/>
            <person name="Galgoczy P."/>
            <person name="Gilbert J."/>
            <person name="Gill R."/>
            <person name="Gloeckner G."/>
            <person name="Gregory S.G."/>
            <person name="Gribble S."/>
            <person name="Griffiths C."/>
            <person name="Grocock R."/>
            <person name="Gu Y."/>
            <person name="Gwilliam R."/>
            <person name="Hamilton C."/>
            <person name="Hart E.A."/>
            <person name="Hawes A."/>
            <person name="Heath P.D."/>
            <person name="Heitmann K."/>
            <person name="Hennig S."/>
            <person name="Hernandez J."/>
            <person name="Hinzmann B."/>
            <person name="Ho S."/>
            <person name="Hoffs M."/>
            <person name="Howden P.J."/>
            <person name="Huckle E.J."/>
            <person name="Hume J."/>
            <person name="Hunt P.J."/>
            <person name="Hunt A.R."/>
            <person name="Isherwood J."/>
            <person name="Jacob L."/>
            <person name="Johnson D."/>
            <person name="Jones S."/>
            <person name="de Jong P.J."/>
            <person name="Joseph S.S."/>
            <person name="Keenan S."/>
            <person name="Kelly S."/>
            <person name="Kershaw J.K."/>
            <person name="Khan Z."/>
            <person name="Kioschis P."/>
            <person name="Klages S."/>
            <person name="Knights A.J."/>
            <person name="Kosiura A."/>
            <person name="Kovar-Smith C."/>
            <person name="Laird G.K."/>
            <person name="Langford C."/>
            <person name="Lawlor S."/>
            <person name="Leversha M."/>
            <person name="Lewis L."/>
            <person name="Liu W."/>
            <person name="Lloyd C."/>
            <person name="Lloyd D.M."/>
            <person name="Loulseged H."/>
            <person name="Loveland J.E."/>
            <person name="Lovell J.D."/>
            <person name="Lozado R."/>
            <person name="Lu J."/>
            <person name="Lyne R."/>
            <person name="Ma J."/>
            <person name="Maheshwari M."/>
            <person name="Matthews L.H."/>
            <person name="McDowall J."/>
            <person name="McLaren S."/>
            <person name="McMurray A."/>
            <person name="Meidl P."/>
            <person name="Meitinger T."/>
            <person name="Milne S."/>
            <person name="Miner G."/>
            <person name="Mistry S.L."/>
            <person name="Morgan M."/>
            <person name="Morris S."/>
            <person name="Mueller I."/>
            <person name="Mullikin J.C."/>
            <person name="Nguyen N."/>
            <person name="Nordsiek G."/>
            <person name="Nyakatura G."/>
            <person name="O'dell C.N."/>
            <person name="Okwuonu G."/>
            <person name="Palmer S."/>
            <person name="Pandian R."/>
            <person name="Parker D."/>
            <person name="Parrish J."/>
            <person name="Pasternak S."/>
            <person name="Patel D."/>
            <person name="Pearce A.V."/>
            <person name="Pearson D.M."/>
            <person name="Pelan S.E."/>
            <person name="Perez L."/>
            <person name="Porter K.M."/>
            <person name="Ramsey Y."/>
            <person name="Reichwald K."/>
            <person name="Rhodes S."/>
            <person name="Ridler K.A."/>
            <person name="Schlessinger D."/>
            <person name="Schueler M.G."/>
            <person name="Sehra H.K."/>
            <person name="Shaw-Smith C."/>
            <person name="Shen H."/>
            <person name="Sheridan E.M."/>
            <person name="Shownkeen R."/>
            <person name="Skuce C.D."/>
            <person name="Smith M.L."/>
            <person name="Sotheran E.C."/>
            <person name="Steingruber H.E."/>
            <person name="Steward C.A."/>
            <person name="Storey R."/>
            <person name="Swann R.M."/>
            <person name="Swarbreck D."/>
            <person name="Tabor P.E."/>
            <person name="Taudien S."/>
            <person name="Taylor T."/>
            <person name="Teague B."/>
            <person name="Thomas K."/>
            <person name="Thorpe A."/>
            <person name="Timms K."/>
            <person name="Tracey A."/>
            <person name="Trevanion S."/>
            <person name="Tromans A.C."/>
            <person name="d'Urso M."/>
            <person name="Verduzco D."/>
            <person name="Villasana D."/>
            <person name="Waldron L."/>
            <person name="Wall M."/>
            <person name="Wang Q."/>
            <person name="Warren J."/>
            <person name="Warry G.L."/>
            <person name="Wei X."/>
            <person name="West A."/>
            <person name="Whitehead S.L."/>
            <person name="Whiteley M.N."/>
            <person name="Wilkinson J.E."/>
            <person name="Willey D.L."/>
            <person name="Williams G."/>
            <person name="Williams L."/>
            <person name="Williamson A."/>
            <person name="Williamson H."/>
            <person name="Wilming L."/>
            <person name="Woodmansey R.L."/>
            <person name="Wray P.W."/>
            <person name="Yen J."/>
            <person name="Zhang J."/>
            <person name="Zhou J."/>
            <person name="Zoghbi H."/>
            <person name="Zorilla S."/>
            <person name="Buck D."/>
            <person name="Reinhardt R."/>
            <person name="Poustka A."/>
            <person name="Rosenthal A."/>
            <person name="Lehrach H."/>
            <person name="Meindl A."/>
            <person name="Minx P.J."/>
            <person name="Hillier L.W."/>
            <person name="Willard H.F."/>
            <person name="Wilson R.K."/>
            <person name="Waterston R.H."/>
            <person name="Rice C.M."/>
            <person name="Vaudin M."/>
            <person name="Coulson A."/>
            <person name="Nelson D.L."/>
            <person name="Weinstock G."/>
            <person name="Sulston J.E."/>
            <person name="Durbin R.M."/>
            <person name="Hubbard T."/>
            <person name="Gibbs R.A."/>
            <person name="Beck S."/>
            <person name="Rogers J."/>
            <person name="Bentley D.R."/>
        </authorList>
    </citation>
    <scope>NUCLEOTIDE SEQUENCE [LARGE SCALE GENOMIC DNA]</scope>
</reference>
<gene>
    <name evidence="3" type="primary">ETDB</name>
</gene>
<proteinExistence type="predicted"/>
<evidence type="ECO:0000256" key="1">
    <source>
        <dbReference type="SAM" id="MobiDB-lite"/>
    </source>
</evidence>
<evidence type="ECO:0000305" key="2"/>
<evidence type="ECO:0000312" key="3">
    <source>
        <dbReference type="HGNC" id="HGNC:44269"/>
    </source>
</evidence>
<keyword id="KW-1185">Reference proteome</keyword>
<dbReference type="EMBL" id="AC234771">
    <property type="status" value="NOT_ANNOTATED_CDS"/>
    <property type="molecule type" value="Genomic_DNA"/>
</dbReference>
<dbReference type="CCDS" id="CCDS87781.1"/>
<dbReference type="RefSeq" id="NP_001342448.1">
    <property type="nucleotide sequence ID" value="NM_001355519.1"/>
</dbReference>
<dbReference type="MassIVE" id="P0DPP9"/>
<dbReference type="PeptideAtlas" id="P0DPP9"/>
<dbReference type="Ensembl" id="ENST00000423661.1">
    <property type="protein sequence ID" value="ENSP00000490943.1"/>
    <property type="gene ID" value="ENSG00000224107.5"/>
</dbReference>
<dbReference type="Ensembl" id="ENST00000426364.5">
    <property type="protein sequence ID" value="ENSP00000490361.1"/>
    <property type="gene ID" value="ENSG00000224107.5"/>
</dbReference>
<dbReference type="GeneID" id="100129515"/>
<dbReference type="MANE-Select" id="ENST00000423661.1">
    <property type="protein sequence ID" value="ENSP00000490943.1"/>
    <property type="RefSeq nucleotide sequence ID" value="NM_001355519.1"/>
    <property type="RefSeq protein sequence ID" value="NP_001342448.1"/>
</dbReference>
<dbReference type="AGR" id="HGNC:44269"/>
<dbReference type="GeneCards" id="ETDB"/>
<dbReference type="HGNC" id="HGNC:44269">
    <property type="gene designation" value="ETDB"/>
</dbReference>
<dbReference type="HPA" id="ENSG00000224107">
    <property type="expression patterns" value="Tissue enriched (testis)"/>
</dbReference>
<dbReference type="neXtProt" id="NX_P0DPP9"/>
<dbReference type="VEuPathDB" id="HostDB:ENSG00000224107"/>
<dbReference type="InParanoid" id="P0DPP9"/>
<dbReference type="OMA" id="KGCSEVC"/>
<dbReference type="OrthoDB" id="9704139at2759"/>
<dbReference type="PAN-GO" id="P0DPP9">
    <property type="GO annotations" value="0 GO annotations based on evolutionary models"/>
</dbReference>
<dbReference type="Pharos" id="P0DPP9">
    <property type="development level" value="Tdark"/>
</dbReference>
<dbReference type="PRO" id="PR:P0DPP9"/>
<dbReference type="Proteomes" id="UP000005640">
    <property type="component" value="Chromosome X"/>
</dbReference>
<dbReference type="Bgee" id="ENSG00000224107">
    <property type="expression patterns" value="Expressed in left testis and 74 other cell types or tissues"/>
</dbReference>
<protein>
    <recommendedName>
        <fullName evidence="2">Embryonic testis differentiation protein homolog B</fullName>
    </recommendedName>
</protein>
<sequence>MDKEVPKGSPREPALNIKKSDKSFKRKKPTENVLIFLINRQLGRHRSDIDLSRWVWMLS</sequence>
<name>ETDB_HUMAN</name>
<accession>P0DPP9</accession>
<feature type="chain" id="PRO_0000445089" description="Embryonic testis differentiation protein homolog B">
    <location>
        <begin position="1"/>
        <end position="59"/>
    </location>
</feature>
<feature type="region of interest" description="Disordered" evidence="1">
    <location>
        <begin position="1"/>
        <end position="25"/>
    </location>
</feature>
<feature type="compositionally biased region" description="Basic and acidic residues" evidence="1">
    <location>
        <begin position="1"/>
        <end position="10"/>
    </location>
</feature>